<organism>
    <name type="scientific">Solanum lycopersicum</name>
    <name type="common">Tomato</name>
    <name type="synonym">Lycopersicon esculentum</name>
    <dbReference type="NCBI Taxonomy" id="4081"/>
    <lineage>
        <taxon>Eukaryota</taxon>
        <taxon>Viridiplantae</taxon>
        <taxon>Streptophyta</taxon>
        <taxon>Embryophyta</taxon>
        <taxon>Tracheophyta</taxon>
        <taxon>Spermatophyta</taxon>
        <taxon>Magnoliopsida</taxon>
        <taxon>eudicotyledons</taxon>
        <taxon>Gunneridae</taxon>
        <taxon>Pentapetalae</taxon>
        <taxon>asterids</taxon>
        <taxon>lamiids</taxon>
        <taxon>Solanales</taxon>
        <taxon>Solanaceae</taxon>
        <taxon>Solanoideae</taxon>
        <taxon>Solaneae</taxon>
        <taxon>Solanum</taxon>
        <taxon>Solanum subgen. Lycopersicon</taxon>
    </lineage>
</organism>
<reference key="1">
    <citation type="journal article" date="1995" name="Plant Physiol.">
        <title>A cDNA clone for isocitrate lyase from tomato.</title>
        <authorList>
            <person name="Janssen B.-J."/>
        </authorList>
    </citation>
    <scope>NUCLEOTIDE SEQUENCE [MRNA]</scope>
    <source>
        <strain>cv. UC82B</strain>
        <tissue>Leaf</tissue>
    </source>
</reference>
<evidence type="ECO:0000250" key="1">
    <source>
        <dbReference type="UniProtKB" id="P28297"/>
    </source>
</evidence>
<evidence type="ECO:0000250" key="2">
    <source>
        <dbReference type="UniProtKB" id="P9WKK7"/>
    </source>
</evidence>
<evidence type="ECO:0000255" key="3"/>
<evidence type="ECO:0000305" key="4"/>
<protein>
    <recommendedName>
        <fullName evidence="1">Isocitrate lyase</fullName>
        <shortName evidence="1">ICL</shortName>
        <ecNumber evidence="1">4.1.3.1</ecNumber>
    </recommendedName>
    <alternativeName>
        <fullName evidence="1">Isocitrase</fullName>
    </alternativeName>
    <alternativeName>
        <fullName evidence="1">Isocitratsysase</fullName>
    </alternativeName>
</protein>
<comment type="function">
    <text evidence="1">Involved in storage lipid mobilization during the growth of higher plant seedling.</text>
</comment>
<comment type="catalytic activity">
    <reaction evidence="1">
        <text>D-threo-isocitrate = glyoxylate + succinate</text>
        <dbReference type="Rhea" id="RHEA:13245"/>
        <dbReference type="ChEBI" id="CHEBI:15562"/>
        <dbReference type="ChEBI" id="CHEBI:30031"/>
        <dbReference type="ChEBI" id="CHEBI:36655"/>
        <dbReference type="EC" id="4.1.3.1"/>
    </reaction>
</comment>
<comment type="cofactor">
    <cofactor evidence="2">
        <name>Mg(2+)</name>
        <dbReference type="ChEBI" id="CHEBI:18420"/>
    </cofactor>
</comment>
<comment type="pathway">
    <text evidence="1">Carbohydrate metabolism; glyoxylate cycle; (S)-malate from isocitrate: step 1/2.</text>
</comment>
<comment type="subunit">
    <text evidence="1">Homotetramer.</text>
</comment>
<comment type="subcellular location">
    <subcellularLocation>
        <location evidence="1">Glyoxysome</location>
    </subcellularLocation>
</comment>
<comment type="similarity">
    <text evidence="4">Belongs to the isocitrate lyase/PEP mutase superfamily. Isocitrate lyase family.</text>
</comment>
<sequence length="575" mass="64720">MAASYSVPSMIMEEERRFEAEVAEVQAWWNTERFRLTKRAYSARDVVALRGTMRQSYASNELAQKLWRTLKTHQANGTASRTFGALDPVQVTMMAKHLDTIYVSGWQCSSTHTSTNEPGPDLADYPYDTVPNKVEHLFFAQQYHDRKQREARMSMCREERARTPFIDYLKPIIADGDTGFGGATATVKLCKLFVERGAAGVHIEDQSSVTKKCGHMAGKVLVAVSEHINRLVAARLQFDVMGTETVLVARTDAVAATLIQTNVDTRDHQFILGASNPNLKGKGLATHLSEAMAAGKTGPELQAIEDNWLGMAELKTFSQCVTDAIKKMNLAEYEKQRKLNEWMNHSSYEKCLSHEQAREVAERLGLPNLFWDWDLPRTREGFYRFQGSVEAAIVRGWAFAEYCDLVWMETSSPDMVECTKFSQGVKTLRPELMLAYNLSPSFNWDASGMNDNQMMDFIPRIAKLGYCWQFITLAGFHADALIVDTFAKDFARRGMLAYVEKIQREERSNGVDTLAHQKWSGANYYDRVLRTVQGGITSTAAMGKGVTEEQFEEKWTRTGATNLGDGSVVIAKARM</sequence>
<accession>P49297</accession>
<keyword id="KW-0329">Glyoxylate bypass</keyword>
<keyword id="KW-0330">Glyoxysome</keyword>
<keyword id="KW-0456">Lyase</keyword>
<keyword id="KW-0460">Magnesium</keyword>
<keyword id="KW-0479">Metal-binding</keyword>
<keyword id="KW-0576">Peroxisome</keyword>
<keyword id="KW-1185">Reference proteome</keyword>
<keyword id="KW-0816">Tricarboxylic acid cycle</keyword>
<name>ACEA_SOLLC</name>
<feature type="chain" id="PRO_0000068808" description="Isocitrate lyase">
    <location>
        <begin position="1"/>
        <end position="575"/>
    </location>
</feature>
<feature type="short sequence motif" description="Microbody targeting signal" evidence="3">
    <location>
        <begin position="573"/>
        <end position="575"/>
    </location>
</feature>
<feature type="active site" description="Proton acceptor" evidence="2">
    <location>
        <position position="213"/>
    </location>
</feature>
<feature type="binding site" evidence="2">
    <location>
        <begin position="104"/>
        <end position="106"/>
    </location>
    <ligand>
        <name>substrate</name>
    </ligand>
</feature>
<feature type="binding site" evidence="2">
    <location>
        <position position="175"/>
    </location>
    <ligand>
        <name>Mg(2+)</name>
        <dbReference type="ChEBI" id="CHEBI:18420"/>
    </ligand>
</feature>
<feature type="binding site" evidence="2">
    <location>
        <begin position="214"/>
        <end position="215"/>
    </location>
    <ligand>
        <name>substrate</name>
    </ligand>
</feature>
<feature type="binding site" evidence="2">
    <location>
        <position position="250"/>
    </location>
    <ligand>
        <name>substrate</name>
    </ligand>
</feature>
<feature type="binding site" evidence="2">
    <location>
        <begin position="437"/>
        <end position="441"/>
    </location>
    <ligand>
        <name>substrate</name>
    </ligand>
</feature>
<feature type="binding site" evidence="2">
    <location>
        <position position="472"/>
    </location>
    <ligand>
        <name>substrate</name>
    </ligand>
</feature>
<proteinExistence type="evidence at transcript level"/>
<dbReference type="EC" id="4.1.3.1" evidence="1"/>
<dbReference type="EMBL" id="U18678">
    <property type="protein sequence ID" value="AAA82738.1"/>
    <property type="molecule type" value="mRNA"/>
</dbReference>
<dbReference type="PIR" id="T06353">
    <property type="entry name" value="T06353"/>
</dbReference>
<dbReference type="SMR" id="P49297"/>
<dbReference type="FunCoup" id="P49297">
    <property type="interactions" value="260"/>
</dbReference>
<dbReference type="STRING" id="4081.P49297"/>
<dbReference type="PaxDb" id="4081-Solyc07g052480.2.1"/>
<dbReference type="eggNOG" id="KOG1260">
    <property type="taxonomic scope" value="Eukaryota"/>
</dbReference>
<dbReference type="InParanoid" id="P49297"/>
<dbReference type="UniPathway" id="UPA00703">
    <property type="reaction ID" value="UER00719"/>
</dbReference>
<dbReference type="Proteomes" id="UP000004994">
    <property type="component" value="Unplaced"/>
</dbReference>
<dbReference type="GO" id="GO:0009514">
    <property type="term" value="C:glyoxysome"/>
    <property type="evidence" value="ECO:0000318"/>
    <property type="project" value="GO_Central"/>
</dbReference>
<dbReference type="GO" id="GO:0004451">
    <property type="term" value="F:isocitrate lyase activity"/>
    <property type="evidence" value="ECO:0000318"/>
    <property type="project" value="GO_Central"/>
</dbReference>
<dbReference type="GO" id="GO:0046872">
    <property type="term" value="F:metal ion binding"/>
    <property type="evidence" value="ECO:0007669"/>
    <property type="project" value="UniProtKB-KW"/>
</dbReference>
<dbReference type="GO" id="GO:0006097">
    <property type="term" value="P:glyoxylate cycle"/>
    <property type="evidence" value="ECO:0007669"/>
    <property type="project" value="UniProtKB-UniPathway"/>
</dbReference>
<dbReference type="GO" id="GO:0006099">
    <property type="term" value="P:tricarboxylic acid cycle"/>
    <property type="evidence" value="ECO:0007669"/>
    <property type="project" value="UniProtKB-KW"/>
</dbReference>
<dbReference type="CDD" id="cd00377">
    <property type="entry name" value="ICL_PEPM"/>
    <property type="match status" value="1"/>
</dbReference>
<dbReference type="FunFam" id="1.10.10.850:FF:000001">
    <property type="entry name" value="Isocitrate lyase"/>
    <property type="match status" value="1"/>
</dbReference>
<dbReference type="Gene3D" id="1.10.10.850">
    <property type="match status" value="1"/>
</dbReference>
<dbReference type="Gene3D" id="3.20.20.60">
    <property type="entry name" value="Phosphoenolpyruvate-binding domains"/>
    <property type="match status" value="1"/>
</dbReference>
<dbReference type="InterPro" id="IPR039556">
    <property type="entry name" value="ICL/PEPM"/>
</dbReference>
<dbReference type="InterPro" id="IPR006254">
    <property type="entry name" value="Isocitrate_lyase"/>
</dbReference>
<dbReference type="InterPro" id="IPR018523">
    <property type="entry name" value="Isocitrate_lyase_ph_CS"/>
</dbReference>
<dbReference type="InterPro" id="IPR015813">
    <property type="entry name" value="Pyrv/PenolPyrv_kinase-like_dom"/>
</dbReference>
<dbReference type="InterPro" id="IPR040442">
    <property type="entry name" value="Pyrv_kinase-like_dom_sf"/>
</dbReference>
<dbReference type="NCBIfam" id="TIGR01346">
    <property type="entry name" value="isocit_lyase"/>
    <property type="match status" value="1"/>
</dbReference>
<dbReference type="PANTHER" id="PTHR21631:SF3">
    <property type="entry name" value="BIFUNCTIONAL GLYOXYLATE CYCLE PROTEIN"/>
    <property type="match status" value="1"/>
</dbReference>
<dbReference type="PANTHER" id="PTHR21631">
    <property type="entry name" value="ISOCITRATE LYASE/MALATE SYNTHASE"/>
    <property type="match status" value="1"/>
</dbReference>
<dbReference type="Pfam" id="PF00463">
    <property type="entry name" value="ICL"/>
    <property type="match status" value="1"/>
</dbReference>
<dbReference type="PIRSF" id="PIRSF001362">
    <property type="entry name" value="Isocit_lyase"/>
    <property type="match status" value="1"/>
</dbReference>
<dbReference type="SUPFAM" id="SSF51621">
    <property type="entry name" value="Phosphoenolpyruvate/pyruvate domain"/>
    <property type="match status" value="1"/>
</dbReference>
<dbReference type="PROSITE" id="PS00161">
    <property type="entry name" value="ISOCITRATE_LYASE"/>
    <property type="match status" value="1"/>
</dbReference>